<accession>P59423</accession>
<organism>
    <name type="scientific">Buchnera aphidicola subsp. Baizongia pistaciae (strain Bp)</name>
    <dbReference type="NCBI Taxonomy" id="224915"/>
    <lineage>
        <taxon>Bacteria</taxon>
        <taxon>Pseudomonadati</taxon>
        <taxon>Pseudomonadota</taxon>
        <taxon>Gammaproteobacteria</taxon>
        <taxon>Enterobacterales</taxon>
        <taxon>Erwiniaceae</taxon>
        <taxon>Buchnera</taxon>
    </lineage>
</organism>
<name>SYE_BUCBP</name>
<comment type="function">
    <text evidence="1">Catalyzes the attachment of glutamate to tRNA(Glu) in a two-step reaction: glutamate is first activated by ATP to form Glu-AMP and then transferred to the acceptor end of tRNA(Glu).</text>
</comment>
<comment type="catalytic activity">
    <reaction evidence="1">
        <text>tRNA(Glu) + L-glutamate + ATP = L-glutamyl-tRNA(Glu) + AMP + diphosphate</text>
        <dbReference type="Rhea" id="RHEA:23540"/>
        <dbReference type="Rhea" id="RHEA-COMP:9663"/>
        <dbReference type="Rhea" id="RHEA-COMP:9680"/>
        <dbReference type="ChEBI" id="CHEBI:29985"/>
        <dbReference type="ChEBI" id="CHEBI:30616"/>
        <dbReference type="ChEBI" id="CHEBI:33019"/>
        <dbReference type="ChEBI" id="CHEBI:78442"/>
        <dbReference type="ChEBI" id="CHEBI:78520"/>
        <dbReference type="ChEBI" id="CHEBI:456215"/>
        <dbReference type="EC" id="6.1.1.17"/>
    </reaction>
</comment>
<comment type="subunit">
    <text evidence="1">Monomer.</text>
</comment>
<comment type="subcellular location">
    <subcellularLocation>
        <location evidence="1">Cytoplasm</location>
    </subcellularLocation>
</comment>
<comment type="similarity">
    <text evidence="1">Belongs to the class-I aminoacyl-tRNA synthetase family. Glutamate--tRNA ligase type 1 subfamily.</text>
</comment>
<sequence>MIIKTRFAPSPTGPLHIGSVRTALYAWLFAKSMNGKFVLRIEDTDKRRSTNAFTSEIINNLEWLGLNWDEGPYFQSDRLEYYRNIIKKMVEAGLAYKCYCTNDRLLKLRKFQISLGKKPKYDRKCRYLVKKDILSTDYVIRFCNPDFGCVTFCDKIRGKISIENKELDDLVIQRADGIPTYNFCVVIDDRDMNITHVIRGEDHISNTPRQINILRALNANIPIYAHVSMVLSEDKQKLSKRNNTITSISEYRLCGYLPESLLNYIVRLGWSHGNQEIFSISEMIKYFTLESLNKSSSCLNKKKLLWLNRFYINNLPETVIKKHLQYQFNKNNIDYKNDSDLLKLVKLLGSRYYTLQEIVDYSRCFYNKSICFNSNIMSKHLDNSSKLILKKIYDKFLDLEVWNVEVIRSLLNSSVCELQISFKKVSMTIRIAVTGHVFSPNLCSVICFLGKNKFLLRIKEALLYIKNMCFEV</sequence>
<evidence type="ECO:0000255" key="1">
    <source>
        <dbReference type="HAMAP-Rule" id="MF_00022"/>
    </source>
</evidence>
<protein>
    <recommendedName>
        <fullName evidence="1">Glutamate--tRNA ligase</fullName>
        <ecNumber evidence="1">6.1.1.17</ecNumber>
    </recommendedName>
    <alternativeName>
        <fullName evidence="1">Glutamyl-tRNA synthetase</fullName>
        <shortName evidence="1">GluRS</shortName>
    </alternativeName>
</protein>
<keyword id="KW-0030">Aminoacyl-tRNA synthetase</keyword>
<keyword id="KW-0067">ATP-binding</keyword>
<keyword id="KW-0963">Cytoplasm</keyword>
<keyword id="KW-0436">Ligase</keyword>
<keyword id="KW-0547">Nucleotide-binding</keyword>
<keyword id="KW-0648">Protein biosynthesis</keyword>
<keyword id="KW-1185">Reference proteome</keyword>
<proteinExistence type="inferred from homology"/>
<feature type="chain" id="PRO_0000119528" description="Glutamate--tRNA ligase">
    <location>
        <begin position="1"/>
        <end position="472"/>
    </location>
</feature>
<feature type="short sequence motif" description="'HIGH' region" evidence="1">
    <location>
        <begin position="9"/>
        <end position="19"/>
    </location>
</feature>
<feature type="short sequence motif" description="'KMSKS' region" evidence="1">
    <location>
        <begin position="237"/>
        <end position="241"/>
    </location>
</feature>
<feature type="binding site" evidence="1">
    <location>
        <position position="240"/>
    </location>
    <ligand>
        <name>ATP</name>
        <dbReference type="ChEBI" id="CHEBI:30616"/>
    </ligand>
</feature>
<gene>
    <name evidence="1" type="primary">gltX</name>
    <name type="ordered locus">bbp_065</name>
</gene>
<dbReference type="EC" id="6.1.1.17" evidence="1"/>
<dbReference type="EMBL" id="AE016826">
    <property type="protein sequence ID" value="AAO26802.1"/>
    <property type="molecule type" value="Genomic_DNA"/>
</dbReference>
<dbReference type="RefSeq" id="WP_011091203.1">
    <property type="nucleotide sequence ID" value="NC_004545.1"/>
</dbReference>
<dbReference type="SMR" id="P59423"/>
<dbReference type="STRING" id="224915.bbp_065"/>
<dbReference type="KEGG" id="bab:bbp_065"/>
<dbReference type="eggNOG" id="COG0008">
    <property type="taxonomic scope" value="Bacteria"/>
</dbReference>
<dbReference type="HOGENOM" id="CLU_015768_6_0_6"/>
<dbReference type="OrthoDB" id="9807503at2"/>
<dbReference type="Proteomes" id="UP000000601">
    <property type="component" value="Chromosome"/>
</dbReference>
<dbReference type="GO" id="GO:0005829">
    <property type="term" value="C:cytosol"/>
    <property type="evidence" value="ECO:0007669"/>
    <property type="project" value="TreeGrafter"/>
</dbReference>
<dbReference type="GO" id="GO:0005524">
    <property type="term" value="F:ATP binding"/>
    <property type="evidence" value="ECO:0007669"/>
    <property type="project" value="UniProtKB-UniRule"/>
</dbReference>
<dbReference type="GO" id="GO:0004818">
    <property type="term" value="F:glutamate-tRNA ligase activity"/>
    <property type="evidence" value="ECO:0007669"/>
    <property type="project" value="UniProtKB-UniRule"/>
</dbReference>
<dbReference type="GO" id="GO:0000049">
    <property type="term" value="F:tRNA binding"/>
    <property type="evidence" value="ECO:0007669"/>
    <property type="project" value="InterPro"/>
</dbReference>
<dbReference type="GO" id="GO:0008270">
    <property type="term" value="F:zinc ion binding"/>
    <property type="evidence" value="ECO:0007669"/>
    <property type="project" value="InterPro"/>
</dbReference>
<dbReference type="GO" id="GO:0006424">
    <property type="term" value="P:glutamyl-tRNA aminoacylation"/>
    <property type="evidence" value="ECO:0007669"/>
    <property type="project" value="UniProtKB-UniRule"/>
</dbReference>
<dbReference type="CDD" id="cd00808">
    <property type="entry name" value="GluRS_core"/>
    <property type="match status" value="1"/>
</dbReference>
<dbReference type="FunFam" id="3.40.50.620:FF:000007">
    <property type="entry name" value="Glutamate--tRNA ligase"/>
    <property type="match status" value="1"/>
</dbReference>
<dbReference type="Gene3D" id="1.10.10.350">
    <property type="match status" value="1"/>
</dbReference>
<dbReference type="Gene3D" id="3.40.50.620">
    <property type="entry name" value="HUPs"/>
    <property type="match status" value="1"/>
</dbReference>
<dbReference type="HAMAP" id="MF_00022">
    <property type="entry name" value="Glu_tRNA_synth_type1"/>
    <property type="match status" value="1"/>
</dbReference>
<dbReference type="InterPro" id="IPR045462">
    <property type="entry name" value="aa-tRNA-synth_I_cd-bd"/>
</dbReference>
<dbReference type="InterPro" id="IPR020751">
    <property type="entry name" value="aa-tRNA-synth_I_codon-bd_sub2"/>
</dbReference>
<dbReference type="InterPro" id="IPR008925">
    <property type="entry name" value="aa_tRNA-synth_I_cd-bd_sf"/>
</dbReference>
<dbReference type="InterPro" id="IPR004527">
    <property type="entry name" value="Glu-tRNA-ligase_bac/mito"/>
</dbReference>
<dbReference type="InterPro" id="IPR000924">
    <property type="entry name" value="Glu/Gln-tRNA-synth"/>
</dbReference>
<dbReference type="InterPro" id="IPR020058">
    <property type="entry name" value="Glu/Gln-tRNA-synth_Ib_cat-dom"/>
</dbReference>
<dbReference type="InterPro" id="IPR049940">
    <property type="entry name" value="GluQ/Sye"/>
</dbReference>
<dbReference type="InterPro" id="IPR033910">
    <property type="entry name" value="GluRS_core"/>
</dbReference>
<dbReference type="InterPro" id="IPR014729">
    <property type="entry name" value="Rossmann-like_a/b/a_fold"/>
</dbReference>
<dbReference type="NCBIfam" id="TIGR00464">
    <property type="entry name" value="gltX_bact"/>
    <property type="match status" value="1"/>
</dbReference>
<dbReference type="PANTHER" id="PTHR43311">
    <property type="entry name" value="GLUTAMATE--TRNA LIGASE"/>
    <property type="match status" value="1"/>
</dbReference>
<dbReference type="PANTHER" id="PTHR43311:SF2">
    <property type="entry name" value="GLUTAMATE--TRNA LIGASE, MITOCHONDRIAL-RELATED"/>
    <property type="match status" value="1"/>
</dbReference>
<dbReference type="Pfam" id="PF19269">
    <property type="entry name" value="Anticodon_2"/>
    <property type="match status" value="1"/>
</dbReference>
<dbReference type="Pfam" id="PF00749">
    <property type="entry name" value="tRNA-synt_1c"/>
    <property type="match status" value="1"/>
</dbReference>
<dbReference type="PRINTS" id="PR00987">
    <property type="entry name" value="TRNASYNTHGLU"/>
</dbReference>
<dbReference type="SUPFAM" id="SSF48163">
    <property type="entry name" value="An anticodon-binding domain of class I aminoacyl-tRNA synthetases"/>
    <property type="match status" value="1"/>
</dbReference>
<dbReference type="SUPFAM" id="SSF52374">
    <property type="entry name" value="Nucleotidylyl transferase"/>
    <property type="match status" value="1"/>
</dbReference>
<reference key="1">
    <citation type="journal article" date="2003" name="Proc. Natl. Acad. Sci. U.S.A.">
        <title>Reductive genome evolution in Buchnera aphidicola.</title>
        <authorList>
            <person name="van Ham R.C.H.J."/>
            <person name="Kamerbeek J."/>
            <person name="Palacios C."/>
            <person name="Rausell C."/>
            <person name="Abascal F."/>
            <person name="Bastolla U."/>
            <person name="Fernandez J.M."/>
            <person name="Jimenez L."/>
            <person name="Postigo M."/>
            <person name="Silva F.J."/>
            <person name="Tamames J."/>
            <person name="Viguera E."/>
            <person name="Latorre A."/>
            <person name="Valencia A."/>
            <person name="Moran F."/>
            <person name="Moya A."/>
        </authorList>
    </citation>
    <scope>NUCLEOTIDE SEQUENCE [LARGE SCALE GENOMIC DNA]</scope>
    <source>
        <strain>Bp</strain>
    </source>
</reference>